<proteinExistence type="inferred from homology"/>
<reference key="1">
    <citation type="journal article" date="2008" name="J. Bacteriol.">
        <title>Genome sequence of Staphylococcus aureus strain Newman and comparative analysis of staphylococcal genomes: polymorphism and evolution of two major pathogenicity islands.</title>
        <authorList>
            <person name="Baba T."/>
            <person name="Bae T."/>
            <person name="Schneewind O."/>
            <person name="Takeuchi F."/>
            <person name="Hiramatsu K."/>
        </authorList>
    </citation>
    <scope>NUCLEOTIDE SEQUENCE [LARGE SCALE GENOMIC DNA]</scope>
    <source>
        <strain>Newman</strain>
    </source>
</reference>
<organism>
    <name type="scientific">Staphylococcus aureus (strain Newman)</name>
    <dbReference type="NCBI Taxonomy" id="426430"/>
    <lineage>
        <taxon>Bacteria</taxon>
        <taxon>Bacillati</taxon>
        <taxon>Bacillota</taxon>
        <taxon>Bacilli</taxon>
        <taxon>Bacillales</taxon>
        <taxon>Staphylococcaceae</taxon>
        <taxon>Staphylococcus</taxon>
    </lineage>
</organism>
<protein>
    <recommendedName>
        <fullName evidence="1">Enolase</fullName>
        <ecNumber evidence="1">4.2.1.11</ecNumber>
    </recommendedName>
    <alternativeName>
        <fullName evidence="1">2-phospho-D-glycerate hydro-lyase</fullName>
    </alternativeName>
    <alternativeName>
        <fullName evidence="1">2-phosphoglycerate dehydratase</fullName>
    </alternativeName>
</protein>
<gene>
    <name evidence="1" type="primary">eno</name>
    <name type="ordered locus">NWMN_0745</name>
</gene>
<comment type="function">
    <text evidence="1">Catalyzes the reversible conversion of 2-phosphoglycerate (2-PG) into phosphoenolpyruvate (PEP). It is essential for the degradation of carbohydrates via glycolysis.</text>
</comment>
<comment type="catalytic activity">
    <reaction evidence="1">
        <text>(2R)-2-phosphoglycerate = phosphoenolpyruvate + H2O</text>
        <dbReference type="Rhea" id="RHEA:10164"/>
        <dbReference type="ChEBI" id="CHEBI:15377"/>
        <dbReference type="ChEBI" id="CHEBI:58289"/>
        <dbReference type="ChEBI" id="CHEBI:58702"/>
        <dbReference type="EC" id="4.2.1.11"/>
    </reaction>
</comment>
<comment type="cofactor">
    <cofactor evidence="1">
        <name>Mg(2+)</name>
        <dbReference type="ChEBI" id="CHEBI:18420"/>
    </cofactor>
    <text evidence="1">Binds a second Mg(2+) ion via substrate during catalysis.</text>
</comment>
<comment type="pathway">
    <text evidence="1">Carbohydrate degradation; glycolysis; pyruvate from D-glyceraldehyde 3-phosphate: step 4/5.</text>
</comment>
<comment type="subcellular location">
    <subcellularLocation>
        <location evidence="1">Cytoplasm</location>
    </subcellularLocation>
    <subcellularLocation>
        <location evidence="1">Secreted</location>
    </subcellularLocation>
    <subcellularLocation>
        <location evidence="1">Cell surface</location>
    </subcellularLocation>
    <text evidence="1">Fractions of enolase are present in both the cytoplasm and on the cell surface.</text>
</comment>
<comment type="similarity">
    <text evidence="1">Belongs to the enolase family.</text>
</comment>
<feature type="chain" id="PRO_1000072012" description="Enolase">
    <location>
        <begin position="1"/>
        <end position="434"/>
    </location>
</feature>
<feature type="active site" description="Proton donor" evidence="1">
    <location>
        <position position="207"/>
    </location>
</feature>
<feature type="active site" description="Proton acceptor" evidence="1">
    <location>
        <position position="343"/>
    </location>
</feature>
<feature type="binding site" evidence="1">
    <location>
        <position position="165"/>
    </location>
    <ligand>
        <name>(2R)-2-phosphoglycerate</name>
        <dbReference type="ChEBI" id="CHEBI:58289"/>
    </ligand>
</feature>
<feature type="binding site" evidence="1">
    <location>
        <position position="244"/>
    </location>
    <ligand>
        <name>Mg(2+)</name>
        <dbReference type="ChEBI" id="CHEBI:18420"/>
    </ligand>
</feature>
<feature type="binding site" evidence="1">
    <location>
        <position position="291"/>
    </location>
    <ligand>
        <name>Mg(2+)</name>
        <dbReference type="ChEBI" id="CHEBI:18420"/>
    </ligand>
</feature>
<feature type="binding site" evidence="1">
    <location>
        <position position="318"/>
    </location>
    <ligand>
        <name>Mg(2+)</name>
        <dbReference type="ChEBI" id="CHEBI:18420"/>
    </ligand>
</feature>
<feature type="binding site" evidence="1">
    <location>
        <position position="343"/>
    </location>
    <ligand>
        <name>(2R)-2-phosphoglycerate</name>
        <dbReference type="ChEBI" id="CHEBI:58289"/>
    </ligand>
</feature>
<feature type="binding site" evidence="1">
    <location>
        <position position="372"/>
    </location>
    <ligand>
        <name>(2R)-2-phosphoglycerate</name>
        <dbReference type="ChEBI" id="CHEBI:58289"/>
    </ligand>
</feature>
<feature type="binding site" evidence="1">
    <location>
        <position position="373"/>
    </location>
    <ligand>
        <name>(2R)-2-phosphoglycerate</name>
        <dbReference type="ChEBI" id="CHEBI:58289"/>
    </ligand>
</feature>
<feature type="binding site" evidence="1">
    <location>
        <position position="394"/>
    </location>
    <ligand>
        <name>(2R)-2-phosphoglycerate</name>
        <dbReference type="ChEBI" id="CHEBI:58289"/>
    </ligand>
</feature>
<keyword id="KW-0963">Cytoplasm</keyword>
<keyword id="KW-0324">Glycolysis</keyword>
<keyword id="KW-0456">Lyase</keyword>
<keyword id="KW-0460">Magnesium</keyword>
<keyword id="KW-0479">Metal-binding</keyword>
<keyword id="KW-0964">Secreted</keyword>
<keyword id="KW-0843">Virulence</keyword>
<name>ENO_STAAE</name>
<evidence type="ECO:0000255" key="1">
    <source>
        <dbReference type="HAMAP-Rule" id="MF_00318"/>
    </source>
</evidence>
<accession>A6QF85</accession>
<sequence>MPIITDVYAREVLDSRGNPTVEVEVLTESGAFGRALVPSGASTGEHEAVELRDGDKSRYLGKGVTKAVENVNEIIAPEIIEGEFSVLDQVSIDKMMIALDGTPNKGKLGANAILGVSIAVARAAADLLGQPLYKYLGGFNGKQLPVPMMNIVNGGSHSDAPIAFQEFMILPVGATTFKESLRWGTEIFHNLKSILSKRGLETAVGDEGGFAPKFEGTEDAVETIIQAIEAAGYKPGEEVFLGFDCASSEFYENGVYDYSKFEGEHGAKRTAAEQVDYLEQLVDKYPIITIEDGMDENDWDGWKQLTERIGDRVQLVGDDLFVTNTEILAKGIENGIGNSILIKVNQIGTLTETFDAIEMAQKAGYTAVVSHRSGETEDTTIADIAVATNAGQIKTGSLSRTDRIAKYNQLLRIEDELFETAKYDGIKSFYNLDK</sequence>
<dbReference type="EC" id="4.2.1.11" evidence="1"/>
<dbReference type="EMBL" id="AP009351">
    <property type="protein sequence ID" value="BAF67017.1"/>
    <property type="molecule type" value="Genomic_DNA"/>
</dbReference>
<dbReference type="RefSeq" id="WP_001121760.1">
    <property type="nucleotide sequence ID" value="NZ_JBBIAE010000002.1"/>
</dbReference>
<dbReference type="SMR" id="A6QF85"/>
<dbReference type="KEGG" id="sae:NWMN_0745"/>
<dbReference type="HOGENOM" id="CLU_031223_2_1_9"/>
<dbReference type="UniPathway" id="UPA00109">
    <property type="reaction ID" value="UER00187"/>
</dbReference>
<dbReference type="Proteomes" id="UP000006386">
    <property type="component" value="Chromosome"/>
</dbReference>
<dbReference type="GO" id="GO:0009986">
    <property type="term" value="C:cell surface"/>
    <property type="evidence" value="ECO:0007669"/>
    <property type="project" value="UniProtKB-SubCell"/>
</dbReference>
<dbReference type="GO" id="GO:0005576">
    <property type="term" value="C:extracellular region"/>
    <property type="evidence" value="ECO:0007669"/>
    <property type="project" value="UniProtKB-SubCell"/>
</dbReference>
<dbReference type="GO" id="GO:0000015">
    <property type="term" value="C:phosphopyruvate hydratase complex"/>
    <property type="evidence" value="ECO:0007669"/>
    <property type="project" value="InterPro"/>
</dbReference>
<dbReference type="GO" id="GO:0000287">
    <property type="term" value="F:magnesium ion binding"/>
    <property type="evidence" value="ECO:0007669"/>
    <property type="project" value="UniProtKB-UniRule"/>
</dbReference>
<dbReference type="GO" id="GO:0004634">
    <property type="term" value="F:phosphopyruvate hydratase activity"/>
    <property type="evidence" value="ECO:0007669"/>
    <property type="project" value="UniProtKB-UniRule"/>
</dbReference>
<dbReference type="GO" id="GO:0006096">
    <property type="term" value="P:glycolytic process"/>
    <property type="evidence" value="ECO:0007669"/>
    <property type="project" value="UniProtKB-UniRule"/>
</dbReference>
<dbReference type="CDD" id="cd03313">
    <property type="entry name" value="enolase"/>
    <property type="match status" value="1"/>
</dbReference>
<dbReference type="FunFam" id="3.20.20.120:FF:000001">
    <property type="entry name" value="Enolase"/>
    <property type="match status" value="1"/>
</dbReference>
<dbReference type="FunFam" id="3.30.390.10:FF:000001">
    <property type="entry name" value="Enolase"/>
    <property type="match status" value="1"/>
</dbReference>
<dbReference type="Gene3D" id="3.20.20.120">
    <property type="entry name" value="Enolase-like C-terminal domain"/>
    <property type="match status" value="1"/>
</dbReference>
<dbReference type="Gene3D" id="3.30.390.10">
    <property type="entry name" value="Enolase-like, N-terminal domain"/>
    <property type="match status" value="1"/>
</dbReference>
<dbReference type="HAMAP" id="MF_00318">
    <property type="entry name" value="Enolase"/>
    <property type="match status" value="1"/>
</dbReference>
<dbReference type="InterPro" id="IPR000941">
    <property type="entry name" value="Enolase"/>
</dbReference>
<dbReference type="InterPro" id="IPR036849">
    <property type="entry name" value="Enolase-like_C_sf"/>
</dbReference>
<dbReference type="InterPro" id="IPR029017">
    <property type="entry name" value="Enolase-like_N"/>
</dbReference>
<dbReference type="InterPro" id="IPR020810">
    <property type="entry name" value="Enolase_C"/>
</dbReference>
<dbReference type="InterPro" id="IPR020809">
    <property type="entry name" value="Enolase_CS"/>
</dbReference>
<dbReference type="InterPro" id="IPR020811">
    <property type="entry name" value="Enolase_N"/>
</dbReference>
<dbReference type="NCBIfam" id="TIGR01060">
    <property type="entry name" value="eno"/>
    <property type="match status" value="1"/>
</dbReference>
<dbReference type="PANTHER" id="PTHR11902">
    <property type="entry name" value="ENOLASE"/>
    <property type="match status" value="1"/>
</dbReference>
<dbReference type="PANTHER" id="PTHR11902:SF1">
    <property type="entry name" value="ENOLASE"/>
    <property type="match status" value="1"/>
</dbReference>
<dbReference type="Pfam" id="PF00113">
    <property type="entry name" value="Enolase_C"/>
    <property type="match status" value="1"/>
</dbReference>
<dbReference type="Pfam" id="PF03952">
    <property type="entry name" value="Enolase_N"/>
    <property type="match status" value="1"/>
</dbReference>
<dbReference type="PIRSF" id="PIRSF001400">
    <property type="entry name" value="Enolase"/>
    <property type="match status" value="1"/>
</dbReference>
<dbReference type="PRINTS" id="PR00148">
    <property type="entry name" value="ENOLASE"/>
</dbReference>
<dbReference type="SFLD" id="SFLDF00002">
    <property type="entry name" value="enolase"/>
    <property type="match status" value="1"/>
</dbReference>
<dbReference type="SFLD" id="SFLDG00178">
    <property type="entry name" value="enolase"/>
    <property type="match status" value="1"/>
</dbReference>
<dbReference type="SMART" id="SM01192">
    <property type="entry name" value="Enolase_C"/>
    <property type="match status" value="1"/>
</dbReference>
<dbReference type="SMART" id="SM01193">
    <property type="entry name" value="Enolase_N"/>
    <property type="match status" value="1"/>
</dbReference>
<dbReference type="SUPFAM" id="SSF51604">
    <property type="entry name" value="Enolase C-terminal domain-like"/>
    <property type="match status" value="1"/>
</dbReference>
<dbReference type="SUPFAM" id="SSF54826">
    <property type="entry name" value="Enolase N-terminal domain-like"/>
    <property type="match status" value="1"/>
</dbReference>
<dbReference type="PROSITE" id="PS00164">
    <property type="entry name" value="ENOLASE"/>
    <property type="match status" value="1"/>
</dbReference>